<evidence type="ECO:0000255" key="1">
    <source>
        <dbReference type="HAMAP-Rule" id="MF_00117"/>
    </source>
</evidence>
<dbReference type="EMBL" id="CP000117">
    <property type="protein sequence ID" value="ABA23799.1"/>
    <property type="molecule type" value="Genomic_DNA"/>
</dbReference>
<dbReference type="SMR" id="Q3M5D7"/>
<dbReference type="STRING" id="240292.Ava_4200"/>
<dbReference type="KEGG" id="ava:Ava_4200"/>
<dbReference type="eggNOG" id="COG1281">
    <property type="taxonomic scope" value="Bacteria"/>
</dbReference>
<dbReference type="HOGENOM" id="CLU_054493_1_0_3"/>
<dbReference type="Proteomes" id="UP000002533">
    <property type="component" value="Chromosome"/>
</dbReference>
<dbReference type="GO" id="GO:0005737">
    <property type="term" value="C:cytoplasm"/>
    <property type="evidence" value="ECO:0007669"/>
    <property type="project" value="UniProtKB-SubCell"/>
</dbReference>
<dbReference type="GO" id="GO:0044183">
    <property type="term" value="F:protein folding chaperone"/>
    <property type="evidence" value="ECO:0007669"/>
    <property type="project" value="TreeGrafter"/>
</dbReference>
<dbReference type="GO" id="GO:0051082">
    <property type="term" value="F:unfolded protein binding"/>
    <property type="evidence" value="ECO:0007669"/>
    <property type="project" value="UniProtKB-UniRule"/>
</dbReference>
<dbReference type="GO" id="GO:0042026">
    <property type="term" value="P:protein refolding"/>
    <property type="evidence" value="ECO:0007669"/>
    <property type="project" value="TreeGrafter"/>
</dbReference>
<dbReference type="CDD" id="cd00498">
    <property type="entry name" value="Hsp33"/>
    <property type="match status" value="1"/>
</dbReference>
<dbReference type="Gene3D" id="3.55.30.10">
    <property type="entry name" value="Hsp33 domain"/>
    <property type="match status" value="1"/>
</dbReference>
<dbReference type="Gene3D" id="3.90.1280.10">
    <property type="entry name" value="HSP33 redox switch-like"/>
    <property type="match status" value="1"/>
</dbReference>
<dbReference type="HAMAP" id="MF_00117">
    <property type="entry name" value="HslO"/>
    <property type="match status" value="1"/>
</dbReference>
<dbReference type="InterPro" id="IPR000397">
    <property type="entry name" value="Heat_shock_Hsp33"/>
</dbReference>
<dbReference type="InterPro" id="IPR016154">
    <property type="entry name" value="Heat_shock_Hsp33_C"/>
</dbReference>
<dbReference type="InterPro" id="IPR016153">
    <property type="entry name" value="Heat_shock_Hsp33_N"/>
</dbReference>
<dbReference type="NCBIfam" id="NF001033">
    <property type="entry name" value="PRK00114.1"/>
    <property type="match status" value="1"/>
</dbReference>
<dbReference type="PANTHER" id="PTHR30111">
    <property type="entry name" value="33 KDA CHAPERONIN"/>
    <property type="match status" value="1"/>
</dbReference>
<dbReference type="PANTHER" id="PTHR30111:SF1">
    <property type="entry name" value="33 KDA CHAPERONIN"/>
    <property type="match status" value="1"/>
</dbReference>
<dbReference type="Pfam" id="PF01430">
    <property type="entry name" value="HSP33"/>
    <property type="match status" value="1"/>
</dbReference>
<dbReference type="PIRSF" id="PIRSF005261">
    <property type="entry name" value="Heat_shock_Hsp33"/>
    <property type="match status" value="1"/>
</dbReference>
<dbReference type="SUPFAM" id="SSF64397">
    <property type="entry name" value="Hsp33 domain"/>
    <property type="match status" value="1"/>
</dbReference>
<dbReference type="SUPFAM" id="SSF118352">
    <property type="entry name" value="HSP33 redox switch-like"/>
    <property type="match status" value="1"/>
</dbReference>
<reference key="1">
    <citation type="journal article" date="2014" name="Stand. Genomic Sci.">
        <title>Complete genome sequence of Anabaena variabilis ATCC 29413.</title>
        <authorList>
            <person name="Thiel T."/>
            <person name="Pratte B.S."/>
            <person name="Zhong J."/>
            <person name="Goodwin L."/>
            <person name="Copeland A."/>
            <person name="Lucas S."/>
            <person name="Han C."/>
            <person name="Pitluck S."/>
            <person name="Land M.L."/>
            <person name="Kyrpides N.C."/>
            <person name="Woyke T."/>
        </authorList>
    </citation>
    <scope>NUCLEOTIDE SEQUENCE [LARGE SCALE GENOMIC DNA]</scope>
    <source>
        <strain>ATCC 29413 / PCC 7937</strain>
    </source>
</reference>
<comment type="function">
    <text evidence="1">Redox regulated molecular chaperone. Protects both thermally unfolding and oxidatively damaged proteins from irreversible aggregation. Plays an important role in the bacterial defense system toward oxidative stress.</text>
</comment>
<comment type="subcellular location">
    <subcellularLocation>
        <location evidence="1">Cytoplasm</location>
    </subcellularLocation>
</comment>
<comment type="PTM">
    <text evidence="1">Under oxidizing conditions two disulfide bonds are formed involving the reactive cysteines. Under reducing conditions zinc is bound to the reactive cysteines and the protein is inactive.</text>
</comment>
<comment type="similarity">
    <text evidence="1">Belongs to the HSP33 family.</text>
</comment>
<name>HSLO_TRIV2</name>
<organism>
    <name type="scientific">Trichormus variabilis (strain ATCC 29413 / PCC 7937)</name>
    <name type="common">Anabaena variabilis</name>
    <dbReference type="NCBI Taxonomy" id="240292"/>
    <lineage>
        <taxon>Bacteria</taxon>
        <taxon>Bacillati</taxon>
        <taxon>Cyanobacteriota</taxon>
        <taxon>Cyanophyceae</taxon>
        <taxon>Nostocales</taxon>
        <taxon>Nostocaceae</taxon>
        <taxon>Trichormus</taxon>
    </lineage>
</organism>
<protein>
    <recommendedName>
        <fullName evidence="1">33 kDa chaperonin</fullName>
    </recommendedName>
    <alternativeName>
        <fullName evidence="1">Heat shock protein 33 homolog</fullName>
        <shortName evidence="1">HSP33</shortName>
    </alternativeName>
</protein>
<accession>Q3M5D7</accession>
<gene>
    <name evidence="1" type="primary">hslO</name>
    <name type="ordered locus">Ava_4200</name>
</gene>
<keyword id="KW-0143">Chaperone</keyword>
<keyword id="KW-0963">Cytoplasm</keyword>
<keyword id="KW-1015">Disulfide bond</keyword>
<keyword id="KW-0676">Redox-active center</keyword>
<keyword id="KW-0862">Zinc</keyword>
<feature type="chain" id="PRO_0000238057" description="33 kDa chaperonin">
    <location>
        <begin position="1"/>
        <end position="301"/>
    </location>
</feature>
<feature type="disulfide bond" description="Redox-active" evidence="1">
    <location>
        <begin position="239"/>
        <end position="241"/>
    </location>
</feature>
<feature type="disulfide bond" description="Redox-active" evidence="1">
    <location>
        <begin position="272"/>
        <end position="275"/>
    </location>
</feature>
<proteinExistence type="inferred from homology"/>
<sequence>MADQLIRATAADGGIRAVGVITTRLTEEARQRHKLSYVATAALGRTMAAGLLMASSMKRAGSRVNVRVKGDGPLAGILVDAGLDGTVRGYVGNPHIELPPNARGKLDVGGAVGNGYLYVVRDIGYGYPYSSTVELVSGEIGDDVAHYLVTSEQTPSALMLGVFVGAGGVTAAGGLLVQVLPKAARDEALVAKLESRVGALSGFTPLLQAGKTLPEIFHDLLGDMGLTIFPESQILRFHCGCSFDRVLGALKMLGEAELQDMIVKDDGAEATCDFCGRVYQASSEHLTQLIVDLQTESSVSG</sequence>